<reference key="1">
    <citation type="submission" date="2007-02" db="EMBL/GenBank/DDBJ databases">
        <title>Complete sequence of chromosome of Yersinia pestis Pestoides F.</title>
        <authorList>
            <consortium name="US DOE Joint Genome Institute"/>
            <person name="Copeland A."/>
            <person name="Lucas S."/>
            <person name="Lapidus A."/>
            <person name="Barry K."/>
            <person name="Detter J.C."/>
            <person name="Glavina del Rio T."/>
            <person name="Hammon N."/>
            <person name="Israni S."/>
            <person name="Dalin E."/>
            <person name="Tice H."/>
            <person name="Pitluck S."/>
            <person name="Di Bartolo G."/>
            <person name="Chain P."/>
            <person name="Malfatti S."/>
            <person name="Shin M."/>
            <person name="Vergez L."/>
            <person name="Schmutz J."/>
            <person name="Larimer F."/>
            <person name="Land M."/>
            <person name="Hauser L."/>
            <person name="Worsham P."/>
            <person name="Chu M."/>
            <person name="Bearden S."/>
            <person name="Garcia E."/>
            <person name="Richardson P."/>
        </authorList>
    </citation>
    <scope>NUCLEOTIDE SEQUENCE [LARGE SCALE GENOMIC DNA]</scope>
    <source>
        <strain>Pestoides F</strain>
    </source>
</reference>
<evidence type="ECO:0000255" key="1">
    <source>
        <dbReference type="HAMAP-Rule" id="MF_00696"/>
    </source>
</evidence>
<feature type="chain" id="PRO_0000301520" description="Fatty acid metabolism regulator protein">
    <location>
        <begin position="1"/>
        <end position="239"/>
    </location>
</feature>
<feature type="domain" description="HTH gntR-type" evidence="1">
    <location>
        <begin position="6"/>
        <end position="74"/>
    </location>
</feature>
<feature type="DNA-binding region" description="H-T-H motif" evidence="1">
    <location>
        <begin position="34"/>
        <end position="53"/>
    </location>
</feature>
<keyword id="KW-0010">Activator</keyword>
<keyword id="KW-0963">Cytoplasm</keyword>
<keyword id="KW-0238">DNA-binding</keyword>
<keyword id="KW-0276">Fatty acid metabolism</keyword>
<keyword id="KW-0443">Lipid metabolism</keyword>
<keyword id="KW-0678">Repressor</keyword>
<keyword id="KW-0804">Transcription</keyword>
<keyword id="KW-0805">Transcription regulation</keyword>
<gene>
    <name evidence="1" type="primary">fadR</name>
    <name type="ordered locus">YPDSF_0988</name>
</gene>
<organism>
    <name type="scientific">Yersinia pestis (strain Pestoides F)</name>
    <dbReference type="NCBI Taxonomy" id="386656"/>
    <lineage>
        <taxon>Bacteria</taxon>
        <taxon>Pseudomonadati</taxon>
        <taxon>Pseudomonadota</taxon>
        <taxon>Gammaproteobacteria</taxon>
        <taxon>Enterobacterales</taxon>
        <taxon>Yersiniaceae</taxon>
        <taxon>Yersinia</taxon>
    </lineage>
</organism>
<accession>A4TJC6</accession>
<dbReference type="EMBL" id="CP000668">
    <property type="protein sequence ID" value="ABP39388.1"/>
    <property type="molecule type" value="Genomic_DNA"/>
</dbReference>
<dbReference type="RefSeq" id="WP_002211688.1">
    <property type="nucleotide sequence ID" value="NZ_CP009715.1"/>
</dbReference>
<dbReference type="SMR" id="A4TJC6"/>
<dbReference type="GeneID" id="96665563"/>
<dbReference type="KEGG" id="ypp:YPDSF_0988"/>
<dbReference type="PATRIC" id="fig|386656.14.peg.2858"/>
<dbReference type="GO" id="GO:0005737">
    <property type="term" value="C:cytoplasm"/>
    <property type="evidence" value="ECO:0007669"/>
    <property type="project" value="UniProtKB-SubCell"/>
</dbReference>
<dbReference type="GO" id="GO:0003677">
    <property type="term" value="F:DNA binding"/>
    <property type="evidence" value="ECO:0007669"/>
    <property type="project" value="UniProtKB-KW"/>
</dbReference>
<dbReference type="GO" id="GO:0003700">
    <property type="term" value="F:DNA-binding transcription factor activity"/>
    <property type="evidence" value="ECO:0007669"/>
    <property type="project" value="UniProtKB-UniRule"/>
</dbReference>
<dbReference type="GO" id="GO:0000062">
    <property type="term" value="F:fatty-acyl-CoA binding"/>
    <property type="evidence" value="ECO:0007669"/>
    <property type="project" value="InterPro"/>
</dbReference>
<dbReference type="GO" id="GO:0006631">
    <property type="term" value="P:fatty acid metabolic process"/>
    <property type="evidence" value="ECO:0007669"/>
    <property type="project" value="UniProtKB-KW"/>
</dbReference>
<dbReference type="GO" id="GO:0019217">
    <property type="term" value="P:regulation of fatty acid metabolic process"/>
    <property type="evidence" value="ECO:0007669"/>
    <property type="project" value="UniProtKB-UniRule"/>
</dbReference>
<dbReference type="CDD" id="cd07377">
    <property type="entry name" value="WHTH_GntR"/>
    <property type="match status" value="1"/>
</dbReference>
<dbReference type="FunFam" id="1.10.10.10:FF:000036">
    <property type="entry name" value="Fatty acid metabolism regulator protein"/>
    <property type="match status" value="1"/>
</dbReference>
<dbReference type="Gene3D" id="1.20.120.530">
    <property type="entry name" value="GntR ligand-binding domain-like"/>
    <property type="match status" value="1"/>
</dbReference>
<dbReference type="Gene3D" id="1.10.10.10">
    <property type="entry name" value="Winged helix-like DNA-binding domain superfamily/Winged helix DNA-binding domain"/>
    <property type="match status" value="1"/>
</dbReference>
<dbReference type="HAMAP" id="MF_00696">
    <property type="entry name" value="HTH_FadR"/>
    <property type="match status" value="1"/>
</dbReference>
<dbReference type="InterPro" id="IPR014178">
    <property type="entry name" value="FA-response_TF_FadR"/>
</dbReference>
<dbReference type="InterPro" id="IPR028374">
    <property type="entry name" value="FadR_C"/>
</dbReference>
<dbReference type="InterPro" id="IPR008920">
    <property type="entry name" value="TF_FadR/GntR_C"/>
</dbReference>
<dbReference type="InterPro" id="IPR000524">
    <property type="entry name" value="Tscrpt_reg_HTH_GntR"/>
</dbReference>
<dbReference type="InterPro" id="IPR036388">
    <property type="entry name" value="WH-like_DNA-bd_sf"/>
</dbReference>
<dbReference type="InterPro" id="IPR036390">
    <property type="entry name" value="WH_DNA-bd_sf"/>
</dbReference>
<dbReference type="NCBIfam" id="TIGR02812">
    <property type="entry name" value="fadR_gamma"/>
    <property type="match status" value="1"/>
</dbReference>
<dbReference type="NCBIfam" id="NF003444">
    <property type="entry name" value="PRK04984.1"/>
    <property type="match status" value="1"/>
</dbReference>
<dbReference type="PANTHER" id="PTHR43537:SF52">
    <property type="entry name" value="FATTY ACID METABOLISM REGULATOR PROTEIN"/>
    <property type="match status" value="1"/>
</dbReference>
<dbReference type="PANTHER" id="PTHR43537">
    <property type="entry name" value="TRANSCRIPTIONAL REGULATOR, GNTR FAMILY"/>
    <property type="match status" value="1"/>
</dbReference>
<dbReference type="Pfam" id="PF07840">
    <property type="entry name" value="FadR_C"/>
    <property type="match status" value="1"/>
</dbReference>
<dbReference type="Pfam" id="PF00392">
    <property type="entry name" value="GntR"/>
    <property type="match status" value="1"/>
</dbReference>
<dbReference type="PRINTS" id="PR00035">
    <property type="entry name" value="HTHGNTR"/>
</dbReference>
<dbReference type="SMART" id="SM00345">
    <property type="entry name" value="HTH_GNTR"/>
    <property type="match status" value="1"/>
</dbReference>
<dbReference type="SUPFAM" id="SSF48008">
    <property type="entry name" value="GntR ligand-binding domain-like"/>
    <property type="match status" value="1"/>
</dbReference>
<dbReference type="SUPFAM" id="SSF46785">
    <property type="entry name" value="Winged helix' DNA-binding domain"/>
    <property type="match status" value="1"/>
</dbReference>
<dbReference type="PROSITE" id="PS50949">
    <property type="entry name" value="HTH_GNTR"/>
    <property type="match status" value="1"/>
</dbReference>
<proteinExistence type="inferred from homology"/>
<protein>
    <recommendedName>
        <fullName evidence="1">Fatty acid metabolism regulator protein</fullName>
    </recommendedName>
</protein>
<sequence length="239" mass="26902">MVIKAQSPAGFAEEYIIESIWNNRFPPGSILPAERELSELIGVTRTTLREVLQRLARDGWLTIQHGKPTKVNNFWETSGLNILETLARLDHDSVPQLIDNLLAVRTNIATIFVRTAIRHHPEKAQEILARAKTVDDNAEAFTALDYGIFRGLAFASGNPIYGLILNGLKGLYTRVGRYYFSNPEARKLALTFYNKLSTLCDTESYDQVLECLRTYGKESGAIWHSMQGTMPSDLAEARR</sequence>
<comment type="function">
    <text evidence="1">Multifunctional regulator of fatty acid metabolism.</text>
</comment>
<comment type="subunit">
    <text evidence="1">Homodimer.</text>
</comment>
<comment type="subcellular location">
    <subcellularLocation>
        <location evidence="1">Cytoplasm</location>
    </subcellularLocation>
</comment>
<name>FADR_YERPP</name>